<reference key="1">
    <citation type="journal article" date="2004" name="Genome Res.">
        <title>The status, quality, and expansion of the NIH full-length cDNA project: the Mammalian Gene Collection (MGC).</title>
        <authorList>
            <consortium name="The MGC Project Team"/>
        </authorList>
    </citation>
    <scope>NUCLEOTIDE SEQUENCE [LARGE SCALE MRNA]</scope>
    <source>
        <tissue>Spleen</tissue>
    </source>
</reference>
<dbReference type="EMBL" id="BC100100">
    <property type="protein sequence ID" value="AAI00101.1"/>
    <property type="molecule type" value="mRNA"/>
</dbReference>
<dbReference type="RefSeq" id="NP_001029304.1">
    <property type="nucleotide sequence ID" value="NM_001034132.1"/>
</dbReference>
<dbReference type="SMR" id="Q498R7"/>
<dbReference type="FunCoup" id="Q498R7">
    <property type="interactions" value="2370"/>
</dbReference>
<dbReference type="PhosphoSitePlus" id="Q498R7"/>
<dbReference type="PaxDb" id="10116-ENSRNOP00000058861"/>
<dbReference type="Ensembl" id="ENSRNOT00000065275.2">
    <property type="protein sequence ID" value="ENSRNOP00000058861.1"/>
    <property type="gene ID" value="ENSRNOG00000012724.7"/>
</dbReference>
<dbReference type="GeneID" id="298384"/>
<dbReference type="KEGG" id="rno:298384"/>
<dbReference type="UCSC" id="RGD:1559786">
    <property type="organism name" value="rat"/>
</dbReference>
<dbReference type="AGR" id="RGD:1559786"/>
<dbReference type="CTD" id="54987"/>
<dbReference type="RGD" id="1559786">
    <property type="gene designation" value="Czib"/>
</dbReference>
<dbReference type="eggNOG" id="KOG1296">
    <property type="taxonomic scope" value="Eukaryota"/>
</dbReference>
<dbReference type="GeneTree" id="ENSGT00390000001523"/>
<dbReference type="HOGENOM" id="CLU_114688_1_0_1"/>
<dbReference type="InParanoid" id="Q498R7"/>
<dbReference type="PhylomeDB" id="Q498R7"/>
<dbReference type="PRO" id="PR:Q498R7"/>
<dbReference type="Proteomes" id="UP000002494">
    <property type="component" value="Chromosome 5"/>
</dbReference>
<dbReference type="Bgee" id="ENSRNOG00000012724">
    <property type="expression patterns" value="Expressed in skeletal muscle tissue and 20 other cell types or tissues"/>
</dbReference>
<dbReference type="GO" id="GO:0008270">
    <property type="term" value="F:zinc ion binding"/>
    <property type="evidence" value="ECO:0000250"/>
    <property type="project" value="UniProtKB"/>
</dbReference>
<dbReference type="InterPro" id="IPR008584">
    <property type="entry name" value="CXXC_Zn-binding_euk"/>
</dbReference>
<dbReference type="PANTHER" id="PTHR12857">
    <property type="entry name" value="CXXC MOTIF CONTAINING ZINC BINDING PROTEIN"/>
    <property type="match status" value="1"/>
</dbReference>
<dbReference type="PANTHER" id="PTHR12857:SF0">
    <property type="entry name" value="CXXC MOTIF CONTAINING ZINC BINDING PROTEIN"/>
    <property type="match status" value="1"/>
</dbReference>
<dbReference type="Pfam" id="PF05907">
    <property type="entry name" value="CXXC_Zn-b_euk"/>
    <property type="match status" value="1"/>
</dbReference>
<dbReference type="SUPFAM" id="SSF141678">
    <property type="entry name" value="MAL13P1.257-like"/>
    <property type="match status" value="1"/>
</dbReference>
<protein>
    <recommendedName>
        <fullName evidence="2">CXXC motif containing zinc binding protein</fullName>
    </recommendedName>
    <alternativeName>
        <fullName>UPF0587 protein C1orf123 homolog</fullName>
    </alternativeName>
</protein>
<gene>
    <name evidence="3" type="primary">Czib</name>
</gene>
<comment type="subunit">
    <text evidence="1">Monomer.</text>
</comment>
<comment type="domain">
    <text evidence="1">The N-terminal and the C-terminal half of the protein have a very similar 3D-structure, suggesting they arose from duplication. Requires a bound zinc ion for normal folding and solubility.</text>
</comment>
<comment type="similarity">
    <text evidence="2">Belongs to the UPF0587 family.</text>
</comment>
<keyword id="KW-0479">Metal-binding</keyword>
<keyword id="KW-0597">Phosphoprotein</keyword>
<keyword id="KW-1185">Reference proteome</keyword>
<keyword id="KW-0862">Zinc</keyword>
<sequence length="160" mass="18095">MGKIALQLKATLENVTNLRPVGEDFRWYLKMKCGNCGEISEKWQYIRLMDSVALKGGRGSASMVQKCKLCARENSIEILSSTIKSYNAEDNEKFKTIVEFECRGLEPVDFQPQAGFAAEGVESGTVFSDINLQEKDWTDYDEKTQESVGIFEVTHQFVKC</sequence>
<feature type="chain" id="PRO_0000264153" description="CXXC motif containing zinc binding protein">
    <location>
        <begin position="1"/>
        <end position="160"/>
    </location>
</feature>
<feature type="binding site" evidence="1">
    <location>
        <position position="33"/>
    </location>
    <ligand>
        <name>Zn(2+)</name>
        <dbReference type="ChEBI" id="CHEBI:29105"/>
    </ligand>
</feature>
<feature type="binding site" evidence="1">
    <location>
        <position position="36"/>
    </location>
    <ligand>
        <name>Zn(2+)</name>
        <dbReference type="ChEBI" id="CHEBI:29105"/>
    </ligand>
</feature>
<feature type="binding site" evidence="1">
    <location>
        <position position="67"/>
    </location>
    <ligand>
        <name>Zn(2+)</name>
        <dbReference type="ChEBI" id="CHEBI:29105"/>
    </ligand>
</feature>
<feature type="binding site" evidence="1">
    <location>
        <position position="70"/>
    </location>
    <ligand>
        <name>Zn(2+)</name>
        <dbReference type="ChEBI" id="CHEBI:29105"/>
    </ligand>
</feature>
<feature type="modified residue" description="Phosphoserine" evidence="1">
    <location>
        <position position="75"/>
    </location>
</feature>
<evidence type="ECO:0000250" key="1">
    <source>
        <dbReference type="UniProtKB" id="Q9NWV4"/>
    </source>
</evidence>
<evidence type="ECO:0000305" key="2"/>
<evidence type="ECO:0000312" key="3">
    <source>
        <dbReference type="RGD" id="1559786"/>
    </source>
</evidence>
<accession>Q498R7</accession>
<proteinExistence type="evidence at transcript level"/>
<organism>
    <name type="scientific">Rattus norvegicus</name>
    <name type="common">Rat</name>
    <dbReference type="NCBI Taxonomy" id="10116"/>
    <lineage>
        <taxon>Eukaryota</taxon>
        <taxon>Metazoa</taxon>
        <taxon>Chordata</taxon>
        <taxon>Craniata</taxon>
        <taxon>Vertebrata</taxon>
        <taxon>Euteleostomi</taxon>
        <taxon>Mammalia</taxon>
        <taxon>Eutheria</taxon>
        <taxon>Euarchontoglires</taxon>
        <taxon>Glires</taxon>
        <taxon>Rodentia</taxon>
        <taxon>Myomorpha</taxon>
        <taxon>Muroidea</taxon>
        <taxon>Muridae</taxon>
        <taxon>Murinae</taxon>
        <taxon>Rattus</taxon>
    </lineage>
</organism>
<name>CZIB_RAT</name>